<name>CYB5_CHICK</name>
<sequence length="138" mass="15545">MVGSSEAGGEAWRGRYYRLEEVQKHNNSQSTWIIVHHRIYDITKFLDEHPGGEEVLREQAGGDATENFEDVGHSTDARALSETFIIGELHPDDRPKLQKPAETLITTVQSNSSSWSNWVIPAIAAIIVALMYRSYMSE</sequence>
<accession>P00174</accession>
<reference key="1">
    <citation type="journal article" date="1990" name="Arch. Biochem. Biophys.">
        <title>Soluble and membrane-bound forms of cytochrome b5 are the products of a single gene in chicken.</title>
        <authorList>
            <person name="Zhang H."/>
            <person name="Somerville C."/>
        </authorList>
    </citation>
    <scope>NUCLEOTIDE SEQUENCE [MRNA]</scope>
</reference>
<reference key="2">
    <citation type="journal article" date="1988" name="Arch. Biochem. Biophys.">
        <title>The primary structure of chicken liver cytochrome b5 deduced from the DNA sequence of a cDNA clone.</title>
        <authorList>
            <person name="Zhang H."/>
            <person name="Somerville C."/>
        </authorList>
    </citation>
    <scope>NUCLEOTIDE SEQUENCE [MRNA]</scope>
</reference>
<reference key="3">
    <citation type="journal article" date="1971" name="J. Biol. Chem.">
        <title>Amino acid sequences of tryptic peptides of cytochromes b5 from microsomes of human, monkey, porcine, and chicken liver.</title>
        <authorList>
            <person name="Nobrega F.G."/>
            <person name="Ozols J."/>
        </authorList>
    </citation>
    <scope>PROTEIN SEQUENCE OF 14-97</scope>
</reference>
<reference key="4">
    <citation type="journal article" date="1989" name="Biochim. Biophys. Acta">
        <title>Structure of cytochrome b5 and its topology in the microsomal membrane.</title>
        <authorList>
            <person name="Ozols J."/>
        </authorList>
    </citation>
    <scope>PROTEIN SEQUENCE OF 4-16 AND 89-138</scope>
</reference>
<protein>
    <recommendedName>
        <fullName>Cytochrome b5</fullName>
    </recommendedName>
</protein>
<comment type="function">
    <text>Cytochrome b5 is a membrane-bound hemoprotein functioning as an electron carrier for several membrane-bound oxygenases.</text>
</comment>
<comment type="subcellular location">
    <subcellularLocation>
        <location>Endoplasmic reticulum membrane</location>
        <topology>Single-pass membrane protein</topology>
        <orientation>Cytoplasmic side</orientation>
    </subcellularLocation>
    <subcellularLocation>
        <location>Microsome membrane</location>
        <topology>Single-pass membrane protein</topology>
        <orientation>Cytoplasmic side</orientation>
    </subcellularLocation>
</comment>
<comment type="similarity">
    <text evidence="3">Belongs to the cytochrome b5 family.</text>
</comment>
<feature type="chain" id="PRO_0000166015" description="Cytochrome b5">
    <location>
        <begin position="1"/>
        <end position="138"/>
    </location>
</feature>
<feature type="transmembrane region" description="Helical" evidence="1">
    <location>
        <begin position="114"/>
        <end position="136"/>
    </location>
</feature>
<feature type="domain" description="Cytochrome b5 heme-binding" evidence="2">
    <location>
        <begin position="14"/>
        <end position="90"/>
    </location>
</feature>
<feature type="binding site" description="axial binding residue">
    <location>
        <position position="49"/>
    </location>
    <ligand>
        <name>heme</name>
        <dbReference type="ChEBI" id="CHEBI:30413"/>
    </ligand>
    <ligandPart>
        <name>Fe</name>
        <dbReference type="ChEBI" id="CHEBI:18248"/>
    </ligandPart>
</feature>
<feature type="binding site" description="axial binding residue">
    <location>
        <position position="73"/>
    </location>
    <ligand>
        <name>heme</name>
        <dbReference type="ChEBI" id="CHEBI:30413"/>
    </ligand>
    <ligandPart>
        <name>Fe</name>
        <dbReference type="ChEBI" id="CHEBI:18248"/>
    </ligandPart>
</feature>
<feature type="sequence conflict" description="In Ref. 4; AA sequence." evidence="3" ref="4">
    <original>W</original>
    <variation>E</variation>
    <location>
        <position position="12"/>
    </location>
</feature>
<feature type="sequence conflict" description="In Ref. 3; AA sequence." evidence="3" ref="3">
    <original>NSQ</original>
    <variation>ZSB</variation>
    <location>
        <begin position="27"/>
        <end position="29"/>
    </location>
</feature>
<feature type="sequence conflict" description="In Ref. 3; AA sequence." evidence="3" ref="3">
    <original>N</original>
    <variation>D</variation>
    <location>
        <position position="67"/>
    </location>
</feature>
<feature type="sequence conflict" description="In Ref. 4; AA sequence." evidence="3" ref="4">
    <original>A</original>
    <variation>T</variation>
    <location>
        <position position="124"/>
    </location>
</feature>
<feature type="sequence conflict" description="In Ref. 4; AA sequence." evidence="3" ref="4">
    <original>E</original>
    <variation>EE</variation>
    <location>
        <position position="138"/>
    </location>
</feature>
<gene>
    <name type="primary">CYB5A</name>
    <name type="synonym">CYB5</name>
</gene>
<organism>
    <name type="scientific">Gallus gallus</name>
    <name type="common">Chicken</name>
    <dbReference type="NCBI Taxonomy" id="9031"/>
    <lineage>
        <taxon>Eukaryota</taxon>
        <taxon>Metazoa</taxon>
        <taxon>Chordata</taxon>
        <taxon>Craniata</taxon>
        <taxon>Vertebrata</taxon>
        <taxon>Euteleostomi</taxon>
        <taxon>Archelosauria</taxon>
        <taxon>Archosauria</taxon>
        <taxon>Dinosauria</taxon>
        <taxon>Saurischia</taxon>
        <taxon>Theropoda</taxon>
        <taxon>Coelurosauria</taxon>
        <taxon>Aves</taxon>
        <taxon>Neognathae</taxon>
        <taxon>Galloanserae</taxon>
        <taxon>Galliformes</taxon>
        <taxon>Phasianidae</taxon>
        <taxon>Phasianinae</taxon>
        <taxon>Gallus</taxon>
    </lineage>
</organism>
<keyword id="KW-0903">Direct protein sequencing</keyword>
<keyword id="KW-0249">Electron transport</keyword>
<keyword id="KW-0256">Endoplasmic reticulum</keyword>
<keyword id="KW-0349">Heme</keyword>
<keyword id="KW-0408">Iron</keyword>
<keyword id="KW-0472">Membrane</keyword>
<keyword id="KW-0479">Metal-binding</keyword>
<keyword id="KW-0492">Microsome</keyword>
<keyword id="KW-1185">Reference proteome</keyword>
<keyword id="KW-0812">Transmembrane</keyword>
<keyword id="KW-1133">Transmembrane helix</keyword>
<keyword id="KW-0813">Transport</keyword>
<proteinExistence type="evidence at protein level"/>
<evidence type="ECO:0000255" key="1"/>
<evidence type="ECO:0000255" key="2">
    <source>
        <dbReference type="PROSITE-ProRule" id="PRU00279"/>
    </source>
</evidence>
<evidence type="ECO:0000305" key="3"/>
<dbReference type="EMBL" id="M32293">
    <property type="protein sequence ID" value="AAA48740.1"/>
    <property type="molecule type" value="mRNA"/>
</dbReference>
<dbReference type="EMBL" id="M18539">
    <property type="protein sequence ID" value="AAA48733.1"/>
    <property type="molecule type" value="mRNA"/>
</dbReference>
<dbReference type="PIR" id="A28811">
    <property type="entry name" value="CBCH5"/>
</dbReference>
<dbReference type="RefSeq" id="NP_001001748.1">
    <property type="nucleotide sequence ID" value="NM_001001748.3"/>
</dbReference>
<dbReference type="SMR" id="P00174"/>
<dbReference type="FunCoup" id="P00174">
    <property type="interactions" value="2652"/>
</dbReference>
<dbReference type="STRING" id="9031.ENSGALP00000022250"/>
<dbReference type="PaxDb" id="9031-ENSGALP00000022250"/>
<dbReference type="Ensembl" id="ENSGALT00010002631.1">
    <property type="protein sequence ID" value="ENSGALP00010001181.1"/>
    <property type="gene ID" value="ENSGALG00010001155.1"/>
</dbReference>
<dbReference type="GeneID" id="414798"/>
<dbReference type="KEGG" id="gga:414798"/>
<dbReference type="CTD" id="1528"/>
<dbReference type="VEuPathDB" id="HostDB:geneid_414798"/>
<dbReference type="eggNOG" id="KOG0537">
    <property type="taxonomic scope" value="Eukaryota"/>
</dbReference>
<dbReference type="GeneTree" id="ENSGT00940000156770"/>
<dbReference type="HOGENOM" id="CLU_102602_3_3_1"/>
<dbReference type="InParanoid" id="P00174"/>
<dbReference type="OMA" id="WTNFLIP"/>
<dbReference type="OrthoDB" id="260519at2759"/>
<dbReference type="PhylomeDB" id="P00174"/>
<dbReference type="TreeFam" id="TF314537"/>
<dbReference type="Reactome" id="R-GGA-196836">
    <property type="pathway name" value="Vitamin C (ascorbate) metabolism"/>
</dbReference>
<dbReference type="Reactome" id="R-GGA-9609523">
    <property type="pathway name" value="Insertion of tail-anchored proteins into the endoplasmic reticulum membrane"/>
</dbReference>
<dbReference type="PRO" id="PR:P00174"/>
<dbReference type="Proteomes" id="UP000000539">
    <property type="component" value="Chromosome 2"/>
</dbReference>
<dbReference type="Bgee" id="ENSGALG00000013708">
    <property type="expression patterns" value="Expressed in kidney and 14 other cell types or tissues"/>
</dbReference>
<dbReference type="GO" id="GO:0005789">
    <property type="term" value="C:endoplasmic reticulum membrane"/>
    <property type="evidence" value="ECO:0000318"/>
    <property type="project" value="GO_Central"/>
</dbReference>
<dbReference type="GO" id="GO:0043231">
    <property type="term" value="C:intracellular membrane-bounded organelle"/>
    <property type="evidence" value="ECO:0000318"/>
    <property type="project" value="GO_Central"/>
</dbReference>
<dbReference type="GO" id="GO:0020037">
    <property type="term" value="F:heme binding"/>
    <property type="evidence" value="ECO:0000318"/>
    <property type="project" value="GO_Central"/>
</dbReference>
<dbReference type="GO" id="GO:0046872">
    <property type="term" value="F:metal ion binding"/>
    <property type="evidence" value="ECO:0007669"/>
    <property type="project" value="UniProtKB-KW"/>
</dbReference>
<dbReference type="FunFam" id="3.10.120.10:FF:000002">
    <property type="entry name" value="Cytochrome b5 type B"/>
    <property type="match status" value="1"/>
</dbReference>
<dbReference type="Gene3D" id="3.10.120.10">
    <property type="entry name" value="Cytochrome b5-like heme/steroid binding domain"/>
    <property type="match status" value="1"/>
</dbReference>
<dbReference type="InterPro" id="IPR001199">
    <property type="entry name" value="Cyt_B5-like_heme/steroid-bd"/>
</dbReference>
<dbReference type="InterPro" id="IPR036400">
    <property type="entry name" value="Cyt_B5-like_heme/steroid_sf"/>
</dbReference>
<dbReference type="InterPro" id="IPR018506">
    <property type="entry name" value="Cyt_B5_heme-BS"/>
</dbReference>
<dbReference type="InterPro" id="IPR050668">
    <property type="entry name" value="Cytochrome_b5"/>
</dbReference>
<dbReference type="PANTHER" id="PTHR19359">
    <property type="entry name" value="CYTOCHROME B5"/>
    <property type="match status" value="1"/>
</dbReference>
<dbReference type="PANTHER" id="PTHR19359:SF150">
    <property type="entry name" value="CYTOCHROME B5"/>
    <property type="match status" value="1"/>
</dbReference>
<dbReference type="Pfam" id="PF00173">
    <property type="entry name" value="Cyt-b5"/>
    <property type="match status" value="1"/>
</dbReference>
<dbReference type="PRINTS" id="PR00363">
    <property type="entry name" value="CYTOCHROMEB5"/>
</dbReference>
<dbReference type="SMART" id="SM01117">
    <property type="entry name" value="Cyt-b5"/>
    <property type="match status" value="1"/>
</dbReference>
<dbReference type="SUPFAM" id="SSF55856">
    <property type="entry name" value="Cytochrome b5-like heme/steroid binding domain"/>
    <property type="match status" value="1"/>
</dbReference>
<dbReference type="PROSITE" id="PS00191">
    <property type="entry name" value="CYTOCHROME_B5_1"/>
    <property type="match status" value="1"/>
</dbReference>
<dbReference type="PROSITE" id="PS50255">
    <property type="entry name" value="CYTOCHROME_B5_2"/>
    <property type="match status" value="1"/>
</dbReference>